<gene>
    <name evidence="1" type="primary">clpX</name>
    <name type="ordered locus">BA_4704</name>
    <name type="ordered locus">GBAA_4704</name>
    <name type="ordered locus">BAS4369</name>
</gene>
<name>CLPX_BACAN</name>
<evidence type="ECO:0000255" key="1">
    <source>
        <dbReference type="HAMAP-Rule" id="MF_00175"/>
    </source>
</evidence>
<evidence type="ECO:0000255" key="2">
    <source>
        <dbReference type="PROSITE-ProRule" id="PRU01250"/>
    </source>
</evidence>
<comment type="function">
    <text evidence="1">ATP-dependent specificity component of the Clp protease. It directs the protease to specific substrates. Can perform chaperone functions in the absence of ClpP.</text>
</comment>
<comment type="subunit">
    <text evidence="1">Component of the ClpX-ClpP complex. Forms a hexameric ring that, in the presence of ATP, binds to fourteen ClpP subunits assembled into a disk-like structure with a central cavity, resembling the structure of eukaryotic proteasomes.</text>
</comment>
<comment type="similarity">
    <text evidence="1">Belongs to the ClpX chaperone family.</text>
</comment>
<dbReference type="EMBL" id="AE016879">
    <property type="protein sequence ID" value="AAP28403.1"/>
    <property type="molecule type" value="Genomic_DNA"/>
</dbReference>
<dbReference type="EMBL" id="AE017334">
    <property type="protein sequence ID" value="AAT33827.1"/>
    <property type="molecule type" value="Genomic_DNA"/>
</dbReference>
<dbReference type="EMBL" id="AE017225">
    <property type="protein sequence ID" value="AAT56667.1"/>
    <property type="molecule type" value="Genomic_DNA"/>
</dbReference>
<dbReference type="RefSeq" id="NP_846917.1">
    <property type="nucleotide sequence ID" value="NC_003997.3"/>
</dbReference>
<dbReference type="RefSeq" id="WP_000472282.1">
    <property type="nucleotide sequence ID" value="NZ_WXXJ01000027.1"/>
</dbReference>
<dbReference type="RefSeq" id="YP_030616.1">
    <property type="nucleotide sequence ID" value="NC_005945.1"/>
</dbReference>
<dbReference type="SMR" id="Q81LB9"/>
<dbReference type="STRING" id="261594.GBAA_4704"/>
<dbReference type="DNASU" id="1083685"/>
<dbReference type="GeneID" id="75087607"/>
<dbReference type="KEGG" id="ban:BA_4704"/>
<dbReference type="KEGG" id="bar:GBAA_4704"/>
<dbReference type="KEGG" id="bat:BAS4369"/>
<dbReference type="PATRIC" id="fig|198094.11.peg.4669"/>
<dbReference type="eggNOG" id="COG1219">
    <property type="taxonomic scope" value="Bacteria"/>
</dbReference>
<dbReference type="HOGENOM" id="CLU_014218_8_2_9"/>
<dbReference type="OMA" id="LDTMFDL"/>
<dbReference type="OrthoDB" id="9804062at2"/>
<dbReference type="Proteomes" id="UP000000427">
    <property type="component" value="Chromosome"/>
</dbReference>
<dbReference type="Proteomes" id="UP000000594">
    <property type="component" value="Chromosome"/>
</dbReference>
<dbReference type="GO" id="GO:0009376">
    <property type="term" value="C:HslUV protease complex"/>
    <property type="evidence" value="ECO:0007669"/>
    <property type="project" value="TreeGrafter"/>
</dbReference>
<dbReference type="GO" id="GO:0005524">
    <property type="term" value="F:ATP binding"/>
    <property type="evidence" value="ECO:0007669"/>
    <property type="project" value="UniProtKB-UniRule"/>
</dbReference>
<dbReference type="GO" id="GO:0016887">
    <property type="term" value="F:ATP hydrolysis activity"/>
    <property type="evidence" value="ECO:0007669"/>
    <property type="project" value="InterPro"/>
</dbReference>
<dbReference type="GO" id="GO:0140662">
    <property type="term" value="F:ATP-dependent protein folding chaperone"/>
    <property type="evidence" value="ECO:0007669"/>
    <property type="project" value="InterPro"/>
</dbReference>
<dbReference type="GO" id="GO:0046983">
    <property type="term" value="F:protein dimerization activity"/>
    <property type="evidence" value="ECO:0007669"/>
    <property type="project" value="InterPro"/>
</dbReference>
<dbReference type="GO" id="GO:0051082">
    <property type="term" value="F:unfolded protein binding"/>
    <property type="evidence" value="ECO:0007669"/>
    <property type="project" value="UniProtKB-UniRule"/>
</dbReference>
<dbReference type="GO" id="GO:0008270">
    <property type="term" value="F:zinc ion binding"/>
    <property type="evidence" value="ECO:0007669"/>
    <property type="project" value="InterPro"/>
</dbReference>
<dbReference type="GO" id="GO:0051301">
    <property type="term" value="P:cell division"/>
    <property type="evidence" value="ECO:0007669"/>
    <property type="project" value="TreeGrafter"/>
</dbReference>
<dbReference type="GO" id="GO:0051603">
    <property type="term" value="P:proteolysis involved in protein catabolic process"/>
    <property type="evidence" value="ECO:0007669"/>
    <property type="project" value="TreeGrafter"/>
</dbReference>
<dbReference type="CDD" id="cd19497">
    <property type="entry name" value="RecA-like_ClpX"/>
    <property type="match status" value="1"/>
</dbReference>
<dbReference type="FunFam" id="1.10.8.60:FF:000002">
    <property type="entry name" value="ATP-dependent Clp protease ATP-binding subunit ClpX"/>
    <property type="match status" value="1"/>
</dbReference>
<dbReference type="FunFam" id="3.40.50.300:FF:000005">
    <property type="entry name" value="ATP-dependent Clp protease ATP-binding subunit ClpX"/>
    <property type="match status" value="1"/>
</dbReference>
<dbReference type="Gene3D" id="1.10.8.60">
    <property type="match status" value="1"/>
</dbReference>
<dbReference type="Gene3D" id="6.20.220.10">
    <property type="entry name" value="ClpX chaperone, C4-type zinc finger domain"/>
    <property type="match status" value="1"/>
</dbReference>
<dbReference type="Gene3D" id="3.40.50.300">
    <property type="entry name" value="P-loop containing nucleotide triphosphate hydrolases"/>
    <property type="match status" value="1"/>
</dbReference>
<dbReference type="HAMAP" id="MF_00175">
    <property type="entry name" value="ClpX"/>
    <property type="match status" value="1"/>
</dbReference>
<dbReference type="InterPro" id="IPR003593">
    <property type="entry name" value="AAA+_ATPase"/>
</dbReference>
<dbReference type="InterPro" id="IPR050052">
    <property type="entry name" value="ATP-dep_Clp_protease_ClpX"/>
</dbReference>
<dbReference type="InterPro" id="IPR003959">
    <property type="entry name" value="ATPase_AAA_core"/>
</dbReference>
<dbReference type="InterPro" id="IPR019489">
    <property type="entry name" value="Clp_ATPase_C"/>
</dbReference>
<dbReference type="InterPro" id="IPR004487">
    <property type="entry name" value="Clp_protease_ATP-bd_su_ClpX"/>
</dbReference>
<dbReference type="InterPro" id="IPR046425">
    <property type="entry name" value="ClpX_bact"/>
</dbReference>
<dbReference type="InterPro" id="IPR027417">
    <property type="entry name" value="P-loop_NTPase"/>
</dbReference>
<dbReference type="InterPro" id="IPR010603">
    <property type="entry name" value="Znf_CppX_C4"/>
</dbReference>
<dbReference type="InterPro" id="IPR038366">
    <property type="entry name" value="Znf_CppX_C4_sf"/>
</dbReference>
<dbReference type="NCBIfam" id="TIGR00382">
    <property type="entry name" value="clpX"/>
    <property type="match status" value="1"/>
</dbReference>
<dbReference type="NCBIfam" id="NF003745">
    <property type="entry name" value="PRK05342.1"/>
    <property type="match status" value="1"/>
</dbReference>
<dbReference type="PANTHER" id="PTHR48102:SF7">
    <property type="entry name" value="ATP-DEPENDENT CLP PROTEASE ATP-BINDING SUBUNIT CLPX-LIKE, MITOCHONDRIAL"/>
    <property type="match status" value="1"/>
</dbReference>
<dbReference type="PANTHER" id="PTHR48102">
    <property type="entry name" value="ATP-DEPENDENT CLP PROTEASE ATP-BINDING SUBUNIT CLPX-LIKE, MITOCHONDRIAL-RELATED"/>
    <property type="match status" value="1"/>
</dbReference>
<dbReference type="Pfam" id="PF07724">
    <property type="entry name" value="AAA_2"/>
    <property type="match status" value="1"/>
</dbReference>
<dbReference type="Pfam" id="PF10431">
    <property type="entry name" value="ClpB_D2-small"/>
    <property type="match status" value="1"/>
</dbReference>
<dbReference type="Pfam" id="PF06689">
    <property type="entry name" value="zf-C4_ClpX"/>
    <property type="match status" value="1"/>
</dbReference>
<dbReference type="SMART" id="SM00382">
    <property type="entry name" value="AAA"/>
    <property type="match status" value="1"/>
</dbReference>
<dbReference type="SMART" id="SM01086">
    <property type="entry name" value="ClpB_D2-small"/>
    <property type="match status" value="1"/>
</dbReference>
<dbReference type="SMART" id="SM00994">
    <property type="entry name" value="zf-C4_ClpX"/>
    <property type="match status" value="1"/>
</dbReference>
<dbReference type="SUPFAM" id="SSF57716">
    <property type="entry name" value="Glucocorticoid receptor-like (DNA-binding domain)"/>
    <property type="match status" value="1"/>
</dbReference>
<dbReference type="SUPFAM" id="SSF52540">
    <property type="entry name" value="P-loop containing nucleoside triphosphate hydrolases"/>
    <property type="match status" value="1"/>
</dbReference>
<dbReference type="PROSITE" id="PS51902">
    <property type="entry name" value="CLPX_ZB"/>
    <property type="match status" value="1"/>
</dbReference>
<proteinExistence type="inferred from homology"/>
<organism>
    <name type="scientific">Bacillus anthracis</name>
    <dbReference type="NCBI Taxonomy" id="1392"/>
    <lineage>
        <taxon>Bacteria</taxon>
        <taxon>Bacillati</taxon>
        <taxon>Bacillota</taxon>
        <taxon>Bacilli</taxon>
        <taxon>Bacillales</taxon>
        <taxon>Bacillaceae</taxon>
        <taxon>Bacillus</taxon>
        <taxon>Bacillus cereus group</taxon>
    </lineage>
</organism>
<keyword id="KW-0067">ATP-binding</keyword>
<keyword id="KW-0143">Chaperone</keyword>
<keyword id="KW-0479">Metal-binding</keyword>
<keyword id="KW-0547">Nucleotide-binding</keyword>
<keyword id="KW-1185">Reference proteome</keyword>
<keyword id="KW-0862">Zinc</keyword>
<reference key="1">
    <citation type="journal article" date="2003" name="Nature">
        <title>The genome sequence of Bacillus anthracis Ames and comparison to closely related bacteria.</title>
        <authorList>
            <person name="Read T.D."/>
            <person name="Peterson S.N."/>
            <person name="Tourasse N.J."/>
            <person name="Baillie L.W."/>
            <person name="Paulsen I.T."/>
            <person name="Nelson K.E."/>
            <person name="Tettelin H."/>
            <person name="Fouts D.E."/>
            <person name="Eisen J.A."/>
            <person name="Gill S.R."/>
            <person name="Holtzapple E.K."/>
            <person name="Okstad O.A."/>
            <person name="Helgason E."/>
            <person name="Rilstone J."/>
            <person name="Wu M."/>
            <person name="Kolonay J.F."/>
            <person name="Beanan M.J."/>
            <person name="Dodson R.J."/>
            <person name="Brinkac L.M."/>
            <person name="Gwinn M.L."/>
            <person name="DeBoy R.T."/>
            <person name="Madpu R."/>
            <person name="Daugherty S.C."/>
            <person name="Durkin A.S."/>
            <person name="Haft D.H."/>
            <person name="Nelson W.C."/>
            <person name="Peterson J.D."/>
            <person name="Pop M."/>
            <person name="Khouri H.M."/>
            <person name="Radune D."/>
            <person name="Benton J.L."/>
            <person name="Mahamoud Y."/>
            <person name="Jiang L."/>
            <person name="Hance I.R."/>
            <person name="Weidman J.F."/>
            <person name="Berry K.J."/>
            <person name="Plaut R.D."/>
            <person name="Wolf A.M."/>
            <person name="Watkins K.L."/>
            <person name="Nierman W.C."/>
            <person name="Hazen A."/>
            <person name="Cline R.T."/>
            <person name="Redmond C."/>
            <person name="Thwaite J.E."/>
            <person name="White O."/>
            <person name="Salzberg S.L."/>
            <person name="Thomason B."/>
            <person name="Friedlander A.M."/>
            <person name="Koehler T.M."/>
            <person name="Hanna P.C."/>
            <person name="Kolstoe A.-B."/>
            <person name="Fraser C.M."/>
        </authorList>
    </citation>
    <scope>NUCLEOTIDE SEQUENCE [LARGE SCALE GENOMIC DNA]</scope>
    <source>
        <strain>Ames / isolate Porton</strain>
    </source>
</reference>
<reference key="2">
    <citation type="journal article" date="2009" name="J. Bacteriol.">
        <title>The complete genome sequence of Bacillus anthracis Ames 'Ancestor'.</title>
        <authorList>
            <person name="Ravel J."/>
            <person name="Jiang L."/>
            <person name="Stanley S.T."/>
            <person name="Wilson M.R."/>
            <person name="Decker R.S."/>
            <person name="Read T.D."/>
            <person name="Worsham P."/>
            <person name="Keim P.S."/>
            <person name="Salzberg S.L."/>
            <person name="Fraser-Liggett C.M."/>
            <person name="Rasko D.A."/>
        </authorList>
    </citation>
    <scope>NUCLEOTIDE SEQUENCE [LARGE SCALE GENOMIC DNA]</scope>
    <source>
        <strain>Ames ancestor</strain>
    </source>
</reference>
<reference key="3">
    <citation type="submission" date="2004-01" db="EMBL/GenBank/DDBJ databases">
        <title>Complete genome sequence of Bacillus anthracis Sterne.</title>
        <authorList>
            <person name="Brettin T.S."/>
            <person name="Bruce D."/>
            <person name="Challacombe J.F."/>
            <person name="Gilna P."/>
            <person name="Han C."/>
            <person name="Hill K."/>
            <person name="Hitchcock P."/>
            <person name="Jackson P."/>
            <person name="Keim P."/>
            <person name="Longmire J."/>
            <person name="Lucas S."/>
            <person name="Okinaka R."/>
            <person name="Richardson P."/>
            <person name="Rubin E."/>
            <person name="Tice H."/>
        </authorList>
    </citation>
    <scope>NUCLEOTIDE SEQUENCE [LARGE SCALE GENOMIC DNA]</scope>
    <source>
        <strain>Sterne</strain>
    </source>
</reference>
<sequence>MFKFNDEKGQLKCSFCGKTQTQVRKLVAGPGVYICDECIELCTEIVQEELAKDEEVEFKDVPKPVEIREILDEYVIGQDNAKKALAVAVYNHYKRINSNSKIDDVELAKSNIALIGPTGSGKTLLAQTLARILNVPFAIADATSLTEAGYVGEDVENILLKLIQAADYDVEKAEKGIIYIDEIDKVARKSENPSITRDVSGEGVQQALLKILEGTVASVPPQGGRKHPHQEFIQIDTTNILFICGGAFDGIEPIIKRRLGEKVIGFGSEKKNADVNEKHVLSHVLPEDLLRFGLIPEFIGRLPVIANLEPLDEDALVDILTKPKNALVKQFQKLLELDDVELEFEEGALIEIAKKAIERKTGARGLRSIIEGLMLEVMFELPSRKDIEKCILTKETVADNAAPKLVLQDGTVLDTKTSA</sequence>
<feature type="chain" id="PRO_0000160305" description="ATP-dependent Clp protease ATP-binding subunit ClpX">
    <location>
        <begin position="1"/>
        <end position="419"/>
    </location>
</feature>
<feature type="domain" description="ClpX-type ZB" evidence="2">
    <location>
        <begin position="1"/>
        <end position="54"/>
    </location>
</feature>
<feature type="binding site" evidence="2">
    <location>
        <position position="13"/>
    </location>
    <ligand>
        <name>Zn(2+)</name>
        <dbReference type="ChEBI" id="CHEBI:29105"/>
    </ligand>
</feature>
<feature type="binding site" evidence="2">
    <location>
        <position position="16"/>
    </location>
    <ligand>
        <name>Zn(2+)</name>
        <dbReference type="ChEBI" id="CHEBI:29105"/>
    </ligand>
</feature>
<feature type="binding site" evidence="2">
    <location>
        <position position="35"/>
    </location>
    <ligand>
        <name>Zn(2+)</name>
        <dbReference type="ChEBI" id="CHEBI:29105"/>
    </ligand>
</feature>
<feature type="binding site" evidence="2">
    <location>
        <position position="38"/>
    </location>
    <ligand>
        <name>Zn(2+)</name>
        <dbReference type="ChEBI" id="CHEBI:29105"/>
    </ligand>
</feature>
<feature type="binding site" evidence="1">
    <location>
        <begin position="117"/>
        <end position="124"/>
    </location>
    <ligand>
        <name>ATP</name>
        <dbReference type="ChEBI" id="CHEBI:30616"/>
    </ligand>
</feature>
<protein>
    <recommendedName>
        <fullName evidence="1">ATP-dependent Clp protease ATP-binding subunit ClpX</fullName>
    </recommendedName>
</protein>
<accession>Q81LB9</accession>
<accession>Q6HSS2</accession>
<accession>Q6KM15</accession>